<reference key="1">
    <citation type="journal article" date="2008" name="Proc. Natl. Acad. Sci. U.S.A.">
        <title>The genome of Clostridium kluyveri, a strict anaerobe with unique metabolic features.</title>
        <authorList>
            <person name="Seedorf H."/>
            <person name="Fricke W.F."/>
            <person name="Veith B."/>
            <person name="Brueggemann H."/>
            <person name="Liesegang H."/>
            <person name="Strittmatter A."/>
            <person name="Miethke M."/>
            <person name="Buckel W."/>
            <person name="Hinderberger J."/>
            <person name="Li F."/>
            <person name="Hagemeier C."/>
            <person name="Thauer R.K."/>
            <person name="Gottschalk G."/>
        </authorList>
    </citation>
    <scope>NUCLEOTIDE SEQUENCE [LARGE SCALE GENOMIC DNA]</scope>
    <source>
        <strain>ATCC 8527 / DSM 555 / NBRC 12016 / NCIMB 10680 / K1</strain>
    </source>
</reference>
<sequence>MDIKKRIDELRKIIEYHNDKYYNQDDPEITDYEYDKLYVELRNLENSHPEYKIQSSPTQKVGGTVKRELRKVKHDIPVVSLQDVFSKEEVYSFVEKITSEVTYPKFVVEKKIDGLTVVLRYYNGELKEAITRGDGSIGESVFENILQVKSIPKHIPSKLNYLEIRGEIYMTNENFIKVNEKQEEIGGKIFKNPRNLAAGTIRQLDTSIVKDRNLDIFIFNLEISEGKKFETHSETLEWLSNQGFDVSPNFKICETADEVWNAILDIEESRWDLGYSIDGAVVKVDNLNDRISLGMTSKVPKWTVAFKYPPEQKETVIEDIIVQVSRTGRLNPLALLRPVILANTTISKATLHNQDFIDSKDIRIGDTVIIQKAGDIIPEIIRSIPEKRPDWAKKYIIPDVCPVCNSKTIREPDGVDTRCSNPDCEAQSFRKIGYFVSKDAMNIVGFGQNTVEALMKDGYIKKISDIYILKNYKDALIEKGIIGKEKSVNNLLNAIELSKDNDIDRLITGLGIRNVGKQSAKILAGNFKSMDELAGAAYEQLIELEDFGPTTVPDILEFFNSNAYIELIKKLKEAGVNTISKTLQKKIDNRFLGKTFVITGTLPTMKRDEAAEIIQSFGGKVSGSVSKRTSFVLAGEEAGSKLTKAQQLGISIITEEDLKDMIK</sequence>
<proteinExistence type="inferred from homology"/>
<evidence type="ECO:0000255" key="1">
    <source>
        <dbReference type="HAMAP-Rule" id="MF_01588"/>
    </source>
</evidence>
<keyword id="KW-0227">DNA damage</keyword>
<keyword id="KW-0234">DNA repair</keyword>
<keyword id="KW-0235">DNA replication</keyword>
<keyword id="KW-0436">Ligase</keyword>
<keyword id="KW-0460">Magnesium</keyword>
<keyword id="KW-0464">Manganese</keyword>
<keyword id="KW-0479">Metal-binding</keyword>
<keyword id="KW-0520">NAD</keyword>
<keyword id="KW-1185">Reference proteome</keyword>
<keyword id="KW-0862">Zinc</keyword>
<name>DNLJ_CLOK5</name>
<dbReference type="EC" id="6.5.1.2" evidence="1"/>
<dbReference type="EMBL" id="CP000673">
    <property type="protein sequence ID" value="EDK35473.1"/>
    <property type="molecule type" value="Genomic_DNA"/>
</dbReference>
<dbReference type="RefSeq" id="WP_012103804.1">
    <property type="nucleotide sequence ID" value="NC_009706.1"/>
</dbReference>
<dbReference type="SMR" id="A5N2X7"/>
<dbReference type="STRING" id="431943.CKL_3482"/>
<dbReference type="KEGG" id="ckl:CKL_3482"/>
<dbReference type="eggNOG" id="COG0272">
    <property type="taxonomic scope" value="Bacteria"/>
</dbReference>
<dbReference type="HOGENOM" id="CLU_007764_2_1_9"/>
<dbReference type="Proteomes" id="UP000002411">
    <property type="component" value="Chromosome"/>
</dbReference>
<dbReference type="GO" id="GO:0005829">
    <property type="term" value="C:cytosol"/>
    <property type="evidence" value="ECO:0007669"/>
    <property type="project" value="TreeGrafter"/>
</dbReference>
<dbReference type="GO" id="GO:0003911">
    <property type="term" value="F:DNA ligase (NAD+) activity"/>
    <property type="evidence" value="ECO:0007669"/>
    <property type="project" value="UniProtKB-UniRule"/>
</dbReference>
<dbReference type="GO" id="GO:0046872">
    <property type="term" value="F:metal ion binding"/>
    <property type="evidence" value="ECO:0007669"/>
    <property type="project" value="UniProtKB-KW"/>
</dbReference>
<dbReference type="GO" id="GO:0006281">
    <property type="term" value="P:DNA repair"/>
    <property type="evidence" value="ECO:0007669"/>
    <property type="project" value="UniProtKB-KW"/>
</dbReference>
<dbReference type="GO" id="GO:0006260">
    <property type="term" value="P:DNA replication"/>
    <property type="evidence" value="ECO:0007669"/>
    <property type="project" value="UniProtKB-KW"/>
</dbReference>
<dbReference type="CDD" id="cd00114">
    <property type="entry name" value="LIGANc"/>
    <property type="match status" value="1"/>
</dbReference>
<dbReference type="Gene3D" id="6.20.10.30">
    <property type="match status" value="1"/>
</dbReference>
<dbReference type="Gene3D" id="1.10.150.20">
    <property type="entry name" value="5' to 3' exonuclease, C-terminal subdomain"/>
    <property type="match status" value="2"/>
</dbReference>
<dbReference type="Gene3D" id="3.40.50.10190">
    <property type="entry name" value="BRCT domain"/>
    <property type="match status" value="1"/>
</dbReference>
<dbReference type="Gene3D" id="3.30.470.30">
    <property type="entry name" value="DNA ligase/mRNA capping enzyme"/>
    <property type="match status" value="1"/>
</dbReference>
<dbReference type="Gene3D" id="1.10.287.610">
    <property type="entry name" value="Helix hairpin bin"/>
    <property type="match status" value="1"/>
</dbReference>
<dbReference type="Gene3D" id="2.40.50.140">
    <property type="entry name" value="Nucleic acid-binding proteins"/>
    <property type="match status" value="1"/>
</dbReference>
<dbReference type="HAMAP" id="MF_01588">
    <property type="entry name" value="DNA_ligase_A"/>
    <property type="match status" value="1"/>
</dbReference>
<dbReference type="InterPro" id="IPR001357">
    <property type="entry name" value="BRCT_dom"/>
</dbReference>
<dbReference type="InterPro" id="IPR036420">
    <property type="entry name" value="BRCT_dom_sf"/>
</dbReference>
<dbReference type="InterPro" id="IPR041663">
    <property type="entry name" value="DisA/LigA_HHH"/>
</dbReference>
<dbReference type="InterPro" id="IPR001679">
    <property type="entry name" value="DNA_ligase"/>
</dbReference>
<dbReference type="InterPro" id="IPR013839">
    <property type="entry name" value="DNAligase_adenylation"/>
</dbReference>
<dbReference type="InterPro" id="IPR013840">
    <property type="entry name" value="DNAligase_N"/>
</dbReference>
<dbReference type="InterPro" id="IPR012340">
    <property type="entry name" value="NA-bd_OB-fold"/>
</dbReference>
<dbReference type="InterPro" id="IPR004150">
    <property type="entry name" value="NAD_DNA_ligase_OB"/>
</dbReference>
<dbReference type="InterPro" id="IPR010994">
    <property type="entry name" value="RuvA_2-like"/>
</dbReference>
<dbReference type="InterPro" id="IPR004149">
    <property type="entry name" value="Znf_DNAligase_C4"/>
</dbReference>
<dbReference type="NCBIfam" id="TIGR00575">
    <property type="entry name" value="dnlj"/>
    <property type="match status" value="1"/>
</dbReference>
<dbReference type="NCBIfam" id="NF005932">
    <property type="entry name" value="PRK07956.1"/>
    <property type="match status" value="1"/>
</dbReference>
<dbReference type="PANTHER" id="PTHR23389">
    <property type="entry name" value="CHROMOSOME TRANSMISSION FIDELITY FACTOR 18"/>
    <property type="match status" value="1"/>
</dbReference>
<dbReference type="PANTHER" id="PTHR23389:SF9">
    <property type="entry name" value="DNA LIGASE"/>
    <property type="match status" value="1"/>
</dbReference>
<dbReference type="Pfam" id="PF00533">
    <property type="entry name" value="BRCT"/>
    <property type="match status" value="1"/>
</dbReference>
<dbReference type="Pfam" id="PF01653">
    <property type="entry name" value="DNA_ligase_aden"/>
    <property type="match status" value="1"/>
</dbReference>
<dbReference type="Pfam" id="PF03120">
    <property type="entry name" value="DNA_ligase_OB"/>
    <property type="match status" value="1"/>
</dbReference>
<dbReference type="Pfam" id="PF03119">
    <property type="entry name" value="DNA_ligase_ZBD"/>
    <property type="match status" value="1"/>
</dbReference>
<dbReference type="Pfam" id="PF12826">
    <property type="entry name" value="HHH_2"/>
    <property type="match status" value="1"/>
</dbReference>
<dbReference type="PIRSF" id="PIRSF001604">
    <property type="entry name" value="LigA"/>
    <property type="match status" value="1"/>
</dbReference>
<dbReference type="SMART" id="SM00292">
    <property type="entry name" value="BRCT"/>
    <property type="match status" value="1"/>
</dbReference>
<dbReference type="SMART" id="SM00532">
    <property type="entry name" value="LIGANc"/>
    <property type="match status" value="1"/>
</dbReference>
<dbReference type="SUPFAM" id="SSF52113">
    <property type="entry name" value="BRCT domain"/>
    <property type="match status" value="1"/>
</dbReference>
<dbReference type="SUPFAM" id="SSF56091">
    <property type="entry name" value="DNA ligase/mRNA capping enzyme, catalytic domain"/>
    <property type="match status" value="1"/>
</dbReference>
<dbReference type="SUPFAM" id="SSF50249">
    <property type="entry name" value="Nucleic acid-binding proteins"/>
    <property type="match status" value="1"/>
</dbReference>
<dbReference type="SUPFAM" id="SSF47781">
    <property type="entry name" value="RuvA domain 2-like"/>
    <property type="match status" value="1"/>
</dbReference>
<dbReference type="PROSITE" id="PS50172">
    <property type="entry name" value="BRCT"/>
    <property type="match status" value="1"/>
</dbReference>
<feature type="chain" id="PRO_0000340340" description="DNA ligase">
    <location>
        <begin position="1"/>
        <end position="663"/>
    </location>
</feature>
<feature type="domain" description="BRCT" evidence="1">
    <location>
        <begin position="586"/>
        <end position="663"/>
    </location>
</feature>
<feature type="active site" description="N6-AMP-lysine intermediate" evidence="1">
    <location>
        <position position="111"/>
    </location>
</feature>
<feature type="binding site" evidence="1">
    <location>
        <begin position="31"/>
        <end position="35"/>
    </location>
    <ligand>
        <name>NAD(+)</name>
        <dbReference type="ChEBI" id="CHEBI:57540"/>
    </ligand>
</feature>
<feature type="binding site" evidence="1">
    <location>
        <begin position="80"/>
        <end position="81"/>
    </location>
    <ligand>
        <name>NAD(+)</name>
        <dbReference type="ChEBI" id="CHEBI:57540"/>
    </ligand>
</feature>
<feature type="binding site" evidence="1">
    <location>
        <position position="109"/>
    </location>
    <ligand>
        <name>NAD(+)</name>
        <dbReference type="ChEBI" id="CHEBI:57540"/>
    </ligand>
</feature>
<feature type="binding site" evidence="1">
    <location>
        <position position="132"/>
    </location>
    <ligand>
        <name>NAD(+)</name>
        <dbReference type="ChEBI" id="CHEBI:57540"/>
    </ligand>
</feature>
<feature type="binding site" evidence="1">
    <location>
        <position position="167"/>
    </location>
    <ligand>
        <name>NAD(+)</name>
        <dbReference type="ChEBI" id="CHEBI:57540"/>
    </ligand>
</feature>
<feature type="binding site" evidence="1">
    <location>
        <position position="283"/>
    </location>
    <ligand>
        <name>NAD(+)</name>
        <dbReference type="ChEBI" id="CHEBI:57540"/>
    </ligand>
</feature>
<feature type="binding site" evidence="1">
    <location>
        <position position="307"/>
    </location>
    <ligand>
        <name>NAD(+)</name>
        <dbReference type="ChEBI" id="CHEBI:57540"/>
    </ligand>
</feature>
<feature type="binding site" evidence="1">
    <location>
        <position position="401"/>
    </location>
    <ligand>
        <name>Zn(2+)</name>
        <dbReference type="ChEBI" id="CHEBI:29105"/>
    </ligand>
</feature>
<feature type="binding site" evidence="1">
    <location>
        <position position="404"/>
    </location>
    <ligand>
        <name>Zn(2+)</name>
        <dbReference type="ChEBI" id="CHEBI:29105"/>
    </ligand>
</feature>
<feature type="binding site" evidence="1">
    <location>
        <position position="419"/>
    </location>
    <ligand>
        <name>Zn(2+)</name>
        <dbReference type="ChEBI" id="CHEBI:29105"/>
    </ligand>
</feature>
<feature type="binding site" evidence="1">
    <location>
        <position position="424"/>
    </location>
    <ligand>
        <name>Zn(2+)</name>
        <dbReference type="ChEBI" id="CHEBI:29105"/>
    </ligand>
</feature>
<organism>
    <name type="scientific">Clostridium kluyveri (strain ATCC 8527 / DSM 555 / NBRC 12016 / NCIMB 10680 / K1)</name>
    <dbReference type="NCBI Taxonomy" id="431943"/>
    <lineage>
        <taxon>Bacteria</taxon>
        <taxon>Bacillati</taxon>
        <taxon>Bacillota</taxon>
        <taxon>Clostridia</taxon>
        <taxon>Eubacteriales</taxon>
        <taxon>Clostridiaceae</taxon>
        <taxon>Clostridium</taxon>
    </lineage>
</organism>
<protein>
    <recommendedName>
        <fullName evidence="1">DNA ligase</fullName>
        <ecNumber evidence="1">6.5.1.2</ecNumber>
    </recommendedName>
    <alternativeName>
        <fullName evidence="1">Polydeoxyribonucleotide synthase [NAD(+)]</fullName>
    </alternativeName>
</protein>
<comment type="function">
    <text evidence="1">DNA ligase that catalyzes the formation of phosphodiester linkages between 5'-phosphoryl and 3'-hydroxyl groups in double-stranded DNA using NAD as a coenzyme and as the energy source for the reaction. It is essential for DNA replication and repair of damaged DNA.</text>
</comment>
<comment type="catalytic activity">
    <reaction evidence="1">
        <text>NAD(+) + (deoxyribonucleotide)n-3'-hydroxyl + 5'-phospho-(deoxyribonucleotide)m = (deoxyribonucleotide)n+m + AMP + beta-nicotinamide D-nucleotide.</text>
        <dbReference type="EC" id="6.5.1.2"/>
    </reaction>
</comment>
<comment type="cofactor">
    <cofactor evidence="1">
        <name>Mg(2+)</name>
        <dbReference type="ChEBI" id="CHEBI:18420"/>
    </cofactor>
    <cofactor evidence="1">
        <name>Mn(2+)</name>
        <dbReference type="ChEBI" id="CHEBI:29035"/>
    </cofactor>
</comment>
<comment type="similarity">
    <text evidence="1">Belongs to the NAD-dependent DNA ligase family. LigA subfamily.</text>
</comment>
<gene>
    <name evidence="1" type="primary">ligA</name>
    <name type="ordered locus">CKL_3482</name>
</gene>
<accession>A5N2X7</accession>